<proteinExistence type="inferred from homology"/>
<feature type="chain" id="PRO_1000135349" description="Phosphoribosyl-AMP cyclohydrolase">
    <location>
        <begin position="1"/>
        <end position="125"/>
    </location>
</feature>
<feature type="binding site" evidence="1">
    <location>
        <position position="74"/>
    </location>
    <ligand>
        <name>Mg(2+)</name>
        <dbReference type="ChEBI" id="CHEBI:18420"/>
    </ligand>
</feature>
<feature type="binding site" evidence="1">
    <location>
        <position position="75"/>
    </location>
    <ligand>
        <name>Zn(2+)</name>
        <dbReference type="ChEBI" id="CHEBI:29105"/>
        <note>ligand shared between dimeric partners</note>
    </ligand>
</feature>
<feature type="binding site" evidence="1">
    <location>
        <position position="76"/>
    </location>
    <ligand>
        <name>Mg(2+)</name>
        <dbReference type="ChEBI" id="CHEBI:18420"/>
    </ligand>
</feature>
<feature type="binding site" evidence="1">
    <location>
        <position position="78"/>
    </location>
    <ligand>
        <name>Mg(2+)</name>
        <dbReference type="ChEBI" id="CHEBI:18420"/>
    </ligand>
</feature>
<feature type="binding site" evidence="1">
    <location>
        <position position="92"/>
    </location>
    <ligand>
        <name>Zn(2+)</name>
        <dbReference type="ChEBI" id="CHEBI:29105"/>
        <note>ligand shared between dimeric partners</note>
    </ligand>
</feature>
<feature type="binding site" evidence="1">
    <location>
        <position position="99"/>
    </location>
    <ligand>
        <name>Zn(2+)</name>
        <dbReference type="ChEBI" id="CHEBI:29105"/>
        <note>ligand shared between dimeric partners</note>
    </ligand>
</feature>
<gene>
    <name evidence="1" type="primary">hisI</name>
    <name type="ordered locus">Gbem_0726</name>
</gene>
<sequence>MIKIDFEKMGGLIPAVIQDNESGEVLMVAFMDEKTLNLTLESGKTWFFSRTRNKYWMKGEESGNTQDVVEVLTDCDADTVVIKVKQNGPAACHTGNRSCFYVRYENGAWVEHSNPLFDPNTVYKK</sequence>
<name>HIS3_CITBB</name>
<organism>
    <name type="scientific">Citrifermentans bemidjiense (strain ATCC BAA-1014 / DSM 16622 / JCM 12645 / Bem)</name>
    <name type="common">Geobacter bemidjiensis</name>
    <dbReference type="NCBI Taxonomy" id="404380"/>
    <lineage>
        <taxon>Bacteria</taxon>
        <taxon>Pseudomonadati</taxon>
        <taxon>Thermodesulfobacteriota</taxon>
        <taxon>Desulfuromonadia</taxon>
        <taxon>Geobacterales</taxon>
        <taxon>Geobacteraceae</taxon>
        <taxon>Citrifermentans</taxon>
    </lineage>
</organism>
<accession>B5EE14</accession>
<keyword id="KW-0028">Amino-acid biosynthesis</keyword>
<keyword id="KW-0963">Cytoplasm</keyword>
<keyword id="KW-0368">Histidine biosynthesis</keyword>
<keyword id="KW-0378">Hydrolase</keyword>
<keyword id="KW-0460">Magnesium</keyword>
<keyword id="KW-0479">Metal-binding</keyword>
<keyword id="KW-1185">Reference proteome</keyword>
<keyword id="KW-0862">Zinc</keyword>
<reference key="1">
    <citation type="submission" date="2008-07" db="EMBL/GenBank/DDBJ databases">
        <title>Complete sequence of Geobacter bemidjiensis BEM.</title>
        <authorList>
            <consortium name="US DOE Joint Genome Institute"/>
            <person name="Lucas S."/>
            <person name="Copeland A."/>
            <person name="Lapidus A."/>
            <person name="Glavina del Rio T."/>
            <person name="Dalin E."/>
            <person name="Tice H."/>
            <person name="Bruce D."/>
            <person name="Goodwin L."/>
            <person name="Pitluck S."/>
            <person name="Kiss H."/>
            <person name="Brettin T."/>
            <person name="Detter J.C."/>
            <person name="Han C."/>
            <person name="Kuske C.R."/>
            <person name="Schmutz J."/>
            <person name="Larimer F."/>
            <person name="Land M."/>
            <person name="Hauser L."/>
            <person name="Kyrpides N."/>
            <person name="Lykidis A."/>
            <person name="Lovley D."/>
            <person name="Richardson P."/>
        </authorList>
    </citation>
    <scope>NUCLEOTIDE SEQUENCE [LARGE SCALE GENOMIC DNA]</scope>
    <source>
        <strain>ATCC BAA-1014 / DSM 16622 / JCM 12645 / Bem</strain>
    </source>
</reference>
<evidence type="ECO:0000255" key="1">
    <source>
        <dbReference type="HAMAP-Rule" id="MF_01021"/>
    </source>
</evidence>
<comment type="function">
    <text evidence="1">Catalyzes the hydrolysis of the adenine ring of phosphoribosyl-AMP.</text>
</comment>
<comment type="catalytic activity">
    <reaction evidence="1">
        <text>1-(5-phospho-beta-D-ribosyl)-5'-AMP + H2O = 1-(5-phospho-beta-D-ribosyl)-5-[(5-phospho-beta-D-ribosylamino)methylideneamino]imidazole-4-carboxamide</text>
        <dbReference type="Rhea" id="RHEA:20049"/>
        <dbReference type="ChEBI" id="CHEBI:15377"/>
        <dbReference type="ChEBI" id="CHEBI:58435"/>
        <dbReference type="ChEBI" id="CHEBI:59457"/>
        <dbReference type="EC" id="3.5.4.19"/>
    </reaction>
</comment>
<comment type="cofactor">
    <cofactor evidence="1">
        <name>Mg(2+)</name>
        <dbReference type="ChEBI" id="CHEBI:18420"/>
    </cofactor>
    <text evidence="1">Binds 1 Mg(2+) ion per subunit.</text>
</comment>
<comment type="cofactor">
    <cofactor evidence="1">
        <name>Zn(2+)</name>
        <dbReference type="ChEBI" id="CHEBI:29105"/>
    </cofactor>
    <text evidence="1">Binds 1 zinc ion per subunit.</text>
</comment>
<comment type="pathway">
    <text evidence="1">Amino-acid biosynthesis; L-histidine biosynthesis; L-histidine from 5-phospho-alpha-D-ribose 1-diphosphate: step 3/9.</text>
</comment>
<comment type="subunit">
    <text evidence="1">Homodimer.</text>
</comment>
<comment type="subcellular location">
    <subcellularLocation>
        <location evidence="1">Cytoplasm</location>
    </subcellularLocation>
</comment>
<comment type="similarity">
    <text evidence="1">Belongs to the PRA-CH family.</text>
</comment>
<protein>
    <recommendedName>
        <fullName evidence="1">Phosphoribosyl-AMP cyclohydrolase</fullName>
        <shortName evidence="1">PRA-CH</shortName>
        <ecNumber evidence="1">3.5.4.19</ecNumber>
    </recommendedName>
</protein>
<dbReference type="EC" id="3.5.4.19" evidence="1"/>
<dbReference type="EMBL" id="CP001124">
    <property type="protein sequence ID" value="ACH37752.1"/>
    <property type="molecule type" value="Genomic_DNA"/>
</dbReference>
<dbReference type="RefSeq" id="WP_012529160.1">
    <property type="nucleotide sequence ID" value="NC_011146.1"/>
</dbReference>
<dbReference type="SMR" id="B5EE14"/>
<dbReference type="STRING" id="404380.Gbem_0726"/>
<dbReference type="KEGG" id="gbm:Gbem_0726"/>
<dbReference type="eggNOG" id="COG0139">
    <property type="taxonomic scope" value="Bacteria"/>
</dbReference>
<dbReference type="HOGENOM" id="CLU_048577_5_0_7"/>
<dbReference type="OrthoDB" id="9795769at2"/>
<dbReference type="UniPathway" id="UPA00031">
    <property type="reaction ID" value="UER00008"/>
</dbReference>
<dbReference type="Proteomes" id="UP000008825">
    <property type="component" value="Chromosome"/>
</dbReference>
<dbReference type="GO" id="GO:0005737">
    <property type="term" value="C:cytoplasm"/>
    <property type="evidence" value="ECO:0007669"/>
    <property type="project" value="UniProtKB-SubCell"/>
</dbReference>
<dbReference type="GO" id="GO:0000287">
    <property type="term" value="F:magnesium ion binding"/>
    <property type="evidence" value="ECO:0007669"/>
    <property type="project" value="UniProtKB-UniRule"/>
</dbReference>
<dbReference type="GO" id="GO:0004635">
    <property type="term" value="F:phosphoribosyl-AMP cyclohydrolase activity"/>
    <property type="evidence" value="ECO:0007669"/>
    <property type="project" value="UniProtKB-UniRule"/>
</dbReference>
<dbReference type="GO" id="GO:0008270">
    <property type="term" value="F:zinc ion binding"/>
    <property type="evidence" value="ECO:0007669"/>
    <property type="project" value="UniProtKB-UniRule"/>
</dbReference>
<dbReference type="GO" id="GO:0000105">
    <property type="term" value="P:L-histidine biosynthetic process"/>
    <property type="evidence" value="ECO:0007669"/>
    <property type="project" value="UniProtKB-UniRule"/>
</dbReference>
<dbReference type="FunFam" id="3.10.20.810:FF:000001">
    <property type="entry name" value="Histidine biosynthesis bifunctional protein HisIE"/>
    <property type="match status" value="1"/>
</dbReference>
<dbReference type="Gene3D" id="3.10.20.810">
    <property type="entry name" value="Phosphoribosyl-AMP cyclohydrolase"/>
    <property type="match status" value="1"/>
</dbReference>
<dbReference type="HAMAP" id="MF_01021">
    <property type="entry name" value="HisI"/>
    <property type="match status" value="1"/>
</dbReference>
<dbReference type="InterPro" id="IPR026660">
    <property type="entry name" value="PRA-CH"/>
</dbReference>
<dbReference type="InterPro" id="IPR002496">
    <property type="entry name" value="PRib_AMP_CycHydrolase_dom"/>
</dbReference>
<dbReference type="InterPro" id="IPR038019">
    <property type="entry name" value="PRib_AMP_CycHydrolase_sf"/>
</dbReference>
<dbReference type="NCBIfam" id="NF000768">
    <property type="entry name" value="PRK00051.1"/>
    <property type="match status" value="1"/>
</dbReference>
<dbReference type="PANTHER" id="PTHR42945">
    <property type="entry name" value="HISTIDINE BIOSYNTHESIS BIFUNCTIONAL PROTEIN"/>
    <property type="match status" value="1"/>
</dbReference>
<dbReference type="PANTHER" id="PTHR42945:SF1">
    <property type="entry name" value="HISTIDINE BIOSYNTHESIS BIFUNCTIONAL PROTEIN HIS7"/>
    <property type="match status" value="1"/>
</dbReference>
<dbReference type="Pfam" id="PF01502">
    <property type="entry name" value="PRA-CH"/>
    <property type="match status" value="1"/>
</dbReference>
<dbReference type="SUPFAM" id="SSF141734">
    <property type="entry name" value="HisI-like"/>
    <property type="match status" value="1"/>
</dbReference>